<sequence>MSSETGPVVVDPTLRRRIEPHEFDAFFDQGELRKETCLLYEIRWGGRHNIWRHTGQNTSRHVEINFIEKFTSERYFYPSTRCSIVWFLSWSPCGECSKAITEFLSGHPNVTLFIYAARLYHHTDQRNRQGLRDLISRGVTIRIMTEQEYCYCWRNFVNYPPSNEVYWPRYPNLWMRLYALELYCIHLGLPPCLKIKRRHQYPLTFFRLNLQSCHYQRIPPHILWATGFI</sequence>
<accession>Q9EQP0</accession>
<proteinExistence type="evidence at transcript level"/>
<dbReference type="EC" id="3.5.4.-" evidence="1"/>
<dbReference type="EC" id="3.5.4.36" evidence="1"/>
<dbReference type="EMBL" id="AF176577">
    <property type="protein sequence ID" value="AAG43414.1"/>
    <property type="molecule type" value="mRNA"/>
</dbReference>
<dbReference type="RefSeq" id="NP_001268585.1">
    <property type="nucleotide sequence ID" value="NM_001281656.1"/>
</dbReference>
<dbReference type="SMR" id="Q9EQP0"/>
<dbReference type="STRING" id="10036.ENSMAUP00000025731"/>
<dbReference type="GeneID" id="101825976"/>
<dbReference type="KEGG" id="maua:101825976"/>
<dbReference type="CTD" id="339"/>
<dbReference type="eggNOG" id="ENOG502SNW2">
    <property type="taxonomic scope" value="Eukaryota"/>
</dbReference>
<dbReference type="OrthoDB" id="5956704at2759"/>
<dbReference type="BRENDA" id="3.5.4.36">
    <property type="organism ID" value="3239"/>
</dbReference>
<dbReference type="Proteomes" id="UP000189706">
    <property type="component" value="Unplaced"/>
</dbReference>
<dbReference type="GO" id="GO:0005737">
    <property type="term" value="C:cytoplasm"/>
    <property type="evidence" value="ECO:0000250"/>
    <property type="project" value="UniProtKB"/>
</dbReference>
<dbReference type="GO" id="GO:0005634">
    <property type="term" value="C:nucleus"/>
    <property type="evidence" value="ECO:0007669"/>
    <property type="project" value="UniProtKB-SubCell"/>
</dbReference>
<dbReference type="GO" id="GO:0004126">
    <property type="term" value="F:cytidine deaminase activity"/>
    <property type="evidence" value="ECO:0007669"/>
    <property type="project" value="TreeGrafter"/>
</dbReference>
<dbReference type="GO" id="GO:0003723">
    <property type="term" value="F:RNA binding"/>
    <property type="evidence" value="ECO:0007669"/>
    <property type="project" value="TreeGrafter"/>
</dbReference>
<dbReference type="GO" id="GO:0008270">
    <property type="term" value="F:zinc ion binding"/>
    <property type="evidence" value="ECO:0007669"/>
    <property type="project" value="InterPro"/>
</dbReference>
<dbReference type="GO" id="GO:0016554">
    <property type="term" value="P:cytidine to uridine editing"/>
    <property type="evidence" value="ECO:0007669"/>
    <property type="project" value="TreeGrafter"/>
</dbReference>
<dbReference type="GO" id="GO:0006397">
    <property type="term" value="P:mRNA processing"/>
    <property type="evidence" value="ECO:0007669"/>
    <property type="project" value="UniProtKB-KW"/>
</dbReference>
<dbReference type="GO" id="GO:0044029">
    <property type="term" value="P:positive regulation of gene expression via chromosomal CpG island demethylation"/>
    <property type="evidence" value="ECO:0000250"/>
    <property type="project" value="UniProtKB"/>
</dbReference>
<dbReference type="CDD" id="cd01283">
    <property type="entry name" value="cytidine_deaminase"/>
    <property type="match status" value="1"/>
</dbReference>
<dbReference type="FunFam" id="3.40.140.10:FF:000049">
    <property type="entry name" value="C-&gt;U-editing enzyme APOBEC-1 isoform X2"/>
    <property type="match status" value="1"/>
</dbReference>
<dbReference type="Gene3D" id="3.40.140.10">
    <property type="entry name" value="Cytidine Deaminase, domain 2"/>
    <property type="match status" value="1"/>
</dbReference>
<dbReference type="InterPro" id="IPR016192">
    <property type="entry name" value="APOBEC/CMP_deaminase_Zn-bd"/>
</dbReference>
<dbReference type="InterPro" id="IPR041547">
    <property type="entry name" value="APOBEC1"/>
</dbReference>
<dbReference type="InterPro" id="IPR050610">
    <property type="entry name" value="APOBEC_Cyt_Deaminase"/>
</dbReference>
<dbReference type="InterPro" id="IPR002125">
    <property type="entry name" value="CMP_dCMP_dom"/>
</dbReference>
<dbReference type="InterPro" id="IPR016193">
    <property type="entry name" value="Cytidine_deaminase-like"/>
</dbReference>
<dbReference type="PANTHER" id="PTHR13857:SF26">
    <property type="entry name" value="C-U-EDITING ENZYME APOBEC-1"/>
    <property type="match status" value="1"/>
</dbReference>
<dbReference type="PANTHER" id="PTHR13857">
    <property type="entry name" value="MRNA EDITING ENZYME"/>
    <property type="match status" value="1"/>
</dbReference>
<dbReference type="Pfam" id="PF18774">
    <property type="entry name" value="APOBEC4_like"/>
    <property type="match status" value="1"/>
</dbReference>
<dbReference type="SUPFAM" id="SSF53927">
    <property type="entry name" value="Cytidine deaminase-like"/>
    <property type="match status" value="1"/>
</dbReference>
<dbReference type="PROSITE" id="PS00903">
    <property type="entry name" value="CYT_DCMP_DEAMINASES_1"/>
    <property type="match status" value="1"/>
</dbReference>
<dbReference type="PROSITE" id="PS51747">
    <property type="entry name" value="CYT_DCMP_DEAMINASES_2"/>
    <property type="match status" value="1"/>
</dbReference>
<comment type="function">
    <text evidence="1 2">Cytidine deaminase catalyzing the cytidine to uridine postranscriptional editing of a variety of mRNAs. Form complexes with cofactors that confer differential editing activity and selectivity. Responsible for the postranscriptional editing of a CAA codon for Gln to a UAA codon for stop in the apolipoprotein B mRNA. Also involved in CGA (Arg) to UGA (Stop) editing in the NF1 mRNA (By similarity). May also play a role in the epigenetic regulation of gene expression by participating in DNA demethylation (By similarity).</text>
</comment>
<comment type="catalytic activity">
    <reaction evidence="1">
        <text>a cytidine in mRNA + H2O + H(+) = a uridine in mRNA + NH4(+)</text>
        <dbReference type="Rhea" id="RHEA:74355"/>
        <dbReference type="Rhea" id="RHEA-COMP:14658"/>
        <dbReference type="Rhea" id="RHEA-COMP:15145"/>
        <dbReference type="ChEBI" id="CHEBI:15377"/>
        <dbReference type="ChEBI" id="CHEBI:15378"/>
        <dbReference type="ChEBI" id="CHEBI:28938"/>
        <dbReference type="ChEBI" id="CHEBI:65315"/>
        <dbReference type="ChEBI" id="CHEBI:82748"/>
    </reaction>
    <physiologicalReaction direction="left-to-right" evidence="1">
        <dbReference type="Rhea" id="RHEA:74356"/>
    </physiologicalReaction>
</comment>
<comment type="catalytic activity">
    <reaction evidence="1">
        <text>cytidine(6666) in apoB mRNA + H2O + H(+) = uridine(6666) in apoB mRNA + NH4(+)</text>
        <dbReference type="Rhea" id="RHEA:21772"/>
        <dbReference type="Rhea" id="RHEA-COMP:13888"/>
        <dbReference type="Rhea" id="RHEA-COMP:13889"/>
        <dbReference type="ChEBI" id="CHEBI:15377"/>
        <dbReference type="ChEBI" id="CHEBI:15378"/>
        <dbReference type="ChEBI" id="CHEBI:28938"/>
        <dbReference type="ChEBI" id="CHEBI:65315"/>
        <dbReference type="ChEBI" id="CHEBI:82748"/>
        <dbReference type="EC" id="3.5.4.36"/>
    </reaction>
    <physiologicalReaction direction="left-to-right" evidence="1">
        <dbReference type="Rhea" id="RHEA:21773"/>
    </physiologicalReaction>
</comment>
<comment type="cofactor">
    <cofactor evidence="3">
        <name>Zn(2+)</name>
        <dbReference type="ChEBI" id="CHEBI:29105"/>
    </cofactor>
    <text evidence="3">Binds 1 Zn(2+) ion per subunit.</text>
</comment>
<comment type="subunit">
    <text evidence="1">Homodimer. Interacts with A1CF; form an mRNA editing complex. Interacts with RBM47; form an mRNA editing complex. Found in a complex with CELF2/CUGBP2 and A1CF. Interacts with HNRPAB. Interacts with SYNCRIP.</text>
</comment>
<comment type="subcellular location">
    <subcellularLocation>
        <location evidence="1">Cytoplasm</location>
    </subcellularLocation>
    <subcellularLocation>
        <location evidence="1">Nucleus</location>
    </subcellularLocation>
</comment>
<comment type="similarity">
    <text evidence="5">Belongs to the cytidine and deoxycytidylate deaminase family.</text>
</comment>
<name>ABEC1_MESAU</name>
<gene>
    <name evidence="1" type="primary">APOBEC1</name>
</gene>
<feature type="chain" id="PRO_0000171743" description="C-&gt;U-editing enzyme APOBEC-1">
    <location>
        <begin position="1"/>
        <end position="229"/>
    </location>
</feature>
<feature type="domain" description="CMP/dCMP-type deaminase" evidence="4">
    <location>
        <begin position="10"/>
        <end position="134"/>
    </location>
</feature>
<feature type="active site" description="Proton donor" evidence="3">
    <location>
        <position position="63"/>
    </location>
</feature>
<feature type="binding site" evidence="3">
    <location>
        <position position="61"/>
    </location>
    <ligand>
        <name>Zn(2+)</name>
        <dbReference type="ChEBI" id="CHEBI:29105"/>
        <note>catalytic</note>
    </ligand>
</feature>
<feature type="binding site" evidence="3">
    <location>
        <position position="93"/>
    </location>
    <ligand>
        <name>Zn(2+)</name>
        <dbReference type="ChEBI" id="CHEBI:29105"/>
        <note>catalytic</note>
    </ligand>
</feature>
<feature type="binding site" evidence="3">
    <location>
        <position position="96"/>
    </location>
    <ligand>
        <name>Zn(2+)</name>
        <dbReference type="ChEBI" id="CHEBI:29105"/>
        <note>catalytic</note>
    </ligand>
</feature>
<keyword id="KW-0963">Cytoplasm</keyword>
<keyword id="KW-0378">Hydrolase</keyword>
<keyword id="KW-0479">Metal-binding</keyword>
<keyword id="KW-0507">mRNA processing</keyword>
<keyword id="KW-0539">Nucleus</keyword>
<keyword id="KW-1185">Reference proteome</keyword>
<keyword id="KW-0862">Zinc</keyword>
<evidence type="ECO:0000250" key="1">
    <source>
        <dbReference type="UniProtKB" id="P41238"/>
    </source>
</evidence>
<evidence type="ECO:0000250" key="2">
    <source>
        <dbReference type="UniProtKB" id="P51908"/>
    </source>
</evidence>
<evidence type="ECO:0000250" key="3">
    <source>
        <dbReference type="UniProtKB" id="Q9Y235"/>
    </source>
</evidence>
<evidence type="ECO:0000255" key="4">
    <source>
        <dbReference type="PROSITE-ProRule" id="PRU01083"/>
    </source>
</evidence>
<evidence type="ECO:0000305" key="5"/>
<protein>
    <recommendedName>
        <fullName evidence="5">C-&gt;U-editing enzyme APOBEC-1</fullName>
        <ecNumber evidence="1">3.5.4.-</ecNumber>
    </recommendedName>
    <alternativeName>
        <fullName evidence="1">Apolipoprotein B mRNA-editing enzyme catalytic polypeptide 1</fullName>
        <shortName evidence="1">APOBEC-1</shortName>
        <shortName evidence="1">Apolipoprotein B mRNA-editing enzyme 1</shortName>
        <ecNumber evidence="1">3.5.4.36</ecNumber>
    </alternativeName>
    <alternativeName>
        <fullName evidence="1">mRNA(cytosine(6666)) deaminase 1</fullName>
    </alternativeName>
</protein>
<reference key="1">
    <citation type="journal article" date="2000" name="J. Nutr.">
        <title>Regulation of intestinal apolipoprotein B mRNA editing levels by a zinc-deficient diet and cDNA cloning of editing protein in hamsters.</title>
        <authorList>
            <person name="Reaves S.K."/>
            <person name="Wu J.Y.J."/>
            <person name="Wu Y."/>
            <person name="Fanzo J.C."/>
            <person name="Wang Y.R."/>
            <person name="Lei P.P."/>
            <person name="Lei K.Y."/>
        </authorList>
    </citation>
    <scope>NUCLEOTIDE SEQUENCE [MRNA]</scope>
    <source>
        <strain>Syrian</strain>
    </source>
</reference>
<organism>
    <name type="scientific">Mesocricetus auratus</name>
    <name type="common">Golden hamster</name>
    <dbReference type="NCBI Taxonomy" id="10036"/>
    <lineage>
        <taxon>Eukaryota</taxon>
        <taxon>Metazoa</taxon>
        <taxon>Chordata</taxon>
        <taxon>Craniata</taxon>
        <taxon>Vertebrata</taxon>
        <taxon>Euteleostomi</taxon>
        <taxon>Mammalia</taxon>
        <taxon>Eutheria</taxon>
        <taxon>Euarchontoglires</taxon>
        <taxon>Glires</taxon>
        <taxon>Rodentia</taxon>
        <taxon>Myomorpha</taxon>
        <taxon>Muroidea</taxon>
        <taxon>Cricetidae</taxon>
        <taxon>Cricetinae</taxon>
        <taxon>Mesocricetus</taxon>
    </lineage>
</organism>